<dbReference type="EMBL" id="CP000230">
    <property type="protein sequence ID" value="ABC21878.1"/>
    <property type="molecule type" value="Genomic_DNA"/>
</dbReference>
<dbReference type="RefSeq" id="WP_011388832.1">
    <property type="nucleotide sequence ID" value="NC_007643.1"/>
</dbReference>
<dbReference type="RefSeq" id="YP_426165.1">
    <property type="nucleotide sequence ID" value="NC_007643.1"/>
</dbReference>
<dbReference type="SMR" id="Q2RVG7"/>
<dbReference type="STRING" id="269796.Rru_A1077"/>
<dbReference type="EnsemblBacteria" id="ABC21878">
    <property type="protein sequence ID" value="ABC21878"/>
    <property type="gene ID" value="Rru_A1077"/>
</dbReference>
<dbReference type="KEGG" id="rru:Rru_A1077"/>
<dbReference type="PATRIC" id="fig|269796.9.peg.1135"/>
<dbReference type="eggNOG" id="COG0231">
    <property type="taxonomic scope" value="Bacteria"/>
</dbReference>
<dbReference type="HOGENOM" id="CLU_074944_1_1_5"/>
<dbReference type="PhylomeDB" id="Q2RVG7"/>
<dbReference type="UniPathway" id="UPA00345"/>
<dbReference type="Proteomes" id="UP000001929">
    <property type="component" value="Chromosome"/>
</dbReference>
<dbReference type="GO" id="GO:0005737">
    <property type="term" value="C:cytoplasm"/>
    <property type="evidence" value="ECO:0007669"/>
    <property type="project" value="UniProtKB-SubCell"/>
</dbReference>
<dbReference type="GO" id="GO:0003746">
    <property type="term" value="F:translation elongation factor activity"/>
    <property type="evidence" value="ECO:0007669"/>
    <property type="project" value="UniProtKB-UniRule"/>
</dbReference>
<dbReference type="GO" id="GO:0043043">
    <property type="term" value="P:peptide biosynthetic process"/>
    <property type="evidence" value="ECO:0007669"/>
    <property type="project" value="InterPro"/>
</dbReference>
<dbReference type="CDD" id="cd04470">
    <property type="entry name" value="S1_EF-P_repeat_1"/>
    <property type="match status" value="1"/>
</dbReference>
<dbReference type="CDD" id="cd05794">
    <property type="entry name" value="S1_EF-P_repeat_2"/>
    <property type="match status" value="1"/>
</dbReference>
<dbReference type="FunFam" id="2.30.30.30:FF:000003">
    <property type="entry name" value="Elongation factor P"/>
    <property type="match status" value="1"/>
</dbReference>
<dbReference type="FunFam" id="2.40.50.140:FF:000004">
    <property type="entry name" value="Elongation factor P"/>
    <property type="match status" value="1"/>
</dbReference>
<dbReference type="FunFam" id="2.40.50.140:FF:000009">
    <property type="entry name" value="Elongation factor P"/>
    <property type="match status" value="1"/>
</dbReference>
<dbReference type="Gene3D" id="2.30.30.30">
    <property type="match status" value="1"/>
</dbReference>
<dbReference type="Gene3D" id="2.40.50.140">
    <property type="entry name" value="Nucleic acid-binding proteins"/>
    <property type="match status" value="2"/>
</dbReference>
<dbReference type="HAMAP" id="MF_00141">
    <property type="entry name" value="EF_P"/>
    <property type="match status" value="1"/>
</dbReference>
<dbReference type="InterPro" id="IPR015365">
    <property type="entry name" value="Elong-fact-P_C"/>
</dbReference>
<dbReference type="InterPro" id="IPR012340">
    <property type="entry name" value="NA-bd_OB-fold"/>
</dbReference>
<dbReference type="InterPro" id="IPR014722">
    <property type="entry name" value="Rib_uL2_dom2"/>
</dbReference>
<dbReference type="InterPro" id="IPR020599">
    <property type="entry name" value="Transl_elong_fac_P/YeiP"/>
</dbReference>
<dbReference type="InterPro" id="IPR013185">
    <property type="entry name" value="Transl_elong_KOW-like"/>
</dbReference>
<dbReference type="InterPro" id="IPR001059">
    <property type="entry name" value="Transl_elong_P/YeiP_cen"/>
</dbReference>
<dbReference type="InterPro" id="IPR011768">
    <property type="entry name" value="Transl_elongation_fac_P"/>
</dbReference>
<dbReference type="InterPro" id="IPR008991">
    <property type="entry name" value="Translation_prot_SH3-like_sf"/>
</dbReference>
<dbReference type="NCBIfam" id="TIGR00038">
    <property type="entry name" value="efp"/>
    <property type="match status" value="1"/>
</dbReference>
<dbReference type="NCBIfam" id="NF001810">
    <property type="entry name" value="PRK00529.1"/>
    <property type="match status" value="1"/>
</dbReference>
<dbReference type="PANTHER" id="PTHR30053">
    <property type="entry name" value="ELONGATION FACTOR P"/>
    <property type="match status" value="1"/>
</dbReference>
<dbReference type="PANTHER" id="PTHR30053:SF14">
    <property type="entry name" value="TRANSLATION ELONGATION FACTOR KOW-LIKE DOMAIN-CONTAINING PROTEIN"/>
    <property type="match status" value="1"/>
</dbReference>
<dbReference type="Pfam" id="PF01132">
    <property type="entry name" value="EFP"/>
    <property type="match status" value="1"/>
</dbReference>
<dbReference type="Pfam" id="PF08207">
    <property type="entry name" value="EFP_N"/>
    <property type="match status" value="1"/>
</dbReference>
<dbReference type="Pfam" id="PF09285">
    <property type="entry name" value="Elong-fact-P_C"/>
    <property type="match status" value="1"/>
</dbReference>
<dbReference type="PIRSF" id="PIRSF005901">
    <property type="entry name" value="EF-P"/>
    <property type="match status" value="1"/>
</dbReference>
<dbReference type="SMART" id="SM01185">
    <property type="entry name" value="EFP"/>
    <property type="match status" value="1"/>
</dbReference>
<dbReference type="SMART" id="SM00841">
    <property type="entry name" value="Elong-fact-P_C"/>
    <property type="match status" value="1"/>
</dbReference>
<dbReference type="SUPFAM" id="SSF50249">
    <property type="entry name" value="Nucleic acid-binding proteins"/>
    <property type="match status" value="2"/>
</dbReference>
<dbReference type="SUPFAM" id="SSF50104">
    <property type="entry name" value="Translation proteins SH3-like domain"/>
    <property type="match status" value="1"/>
</dbReference>
<reference key="1">
    <citation type="journal article" date="2011" name="Stand. Genomic Sci.">
        <title>Complete genome sequence of Rhodospirillum rubrum type strain (S1).</title>
        <authorList>
            <person name="Munk A.C."/>
            <person name="Copeland A."/>
            <person name="Lucas S."/>
            <person name="Lapidus A."/>
            <person name="Del Rio T.G."/>
            <person name="Barry K."/>
            <person name="Detter J.C."/>
            <person name="Hammon N."/>
            <person name="Israni S."/>
            <person name="Pitluck S."/>
            <person name="Brettin T."/>
            <person name="Bruce D."/>
            <person name="Han C."/>
            <person name="Tapia R."/>
            <person name="Gilna P."/>
            <person name="Schmutz J."/>
            <person name="Larimer F."/>
            <person name="Land M."/>
            <person name="Kyrpides N.C."/>
            <person name="Mavromatis K."/>
            <person name="Richardson P."/>
            <person name="Rohde M."/>
            <person name="Goeker M."/>
            <person name="Klenk H.P."/>
            <person name="Zhang Y."/>
            <person name="Roberts G.P."/>
            <person name="Reslewic S."/>
            <person name="Schwartz D.C."/>
        </authorList>
    </citation>
    <scope>NUCLEOTIDE SEQUENCE [LARGE SCALE GENOMIC DNA]</scope>
    <source>
        <strain>ATCC 11170 / ATH 1.1.1 / DSM 467 / LMG 4362 / NCIMB 8255 / S1</strain>
    </source>
</reference>
<protein>
    <recommendedName>
        <fullName evidence="1">Elongation factor P</fullName>
        <shortName evidence="1">EF-P</shortName>
    </recommendedName>
</protein>
<organism>
    <name type="scientific">Rhodospirillum rubrum (strain ATCC 11170 / ATH 1.1.1 / DSM 467 / LMG 4362 / NCIMB 8255 / S1)</name>
    <dbReference type="NCBI Taxonomy" id="269796"/>
    <lineage>
        <taxon>Bacteria</taxon>
        <taxon>Pseudomonadati</taxon>
        <taxon>Pseudomonadota</taxon>
        <taxon>Alphaproteobacteria</taxon>
        <taxon>Rhodospirillales</taxon>
        <taxon>Rhodospirillaceae</taxon>
        <taxon>Rhodospirillum</taxon>
    </lineage>
</organism>
<feature type="chain" id="PRO_1000010832" description="Elongation factor P">
    <location>
        <begin position="1"/>
        <end position="187"/>
    </location>
</feature>
<name>EFP_RHORT</name>
<keyword id="KW-0963">Cytoplasm</keyword>
<keyword id="KW-0251">Elongation factor</keyword>
<keyword id="KW-0648">Protein biosynthesis</keyword>
<keyword id="KW-1185">Reference proteome</keyword>
<accession>Q2RVG7</accession>
<sequence>MKMQANQIRPGQVLEHQGKRWTVLKIQLIQPGKGGAFIAVEMRDVDSGNKTNERWRTADTVERLEVREIDCQYLFKDDTGYTFMDKETFEQFSMAADALGEQAGFLQESMEVTVDCIEGSPVSVNLPSQVILQVVEADAVVKGQTASSSYKPGLLENGMKVMIPPFIEAGTRIVVSTVDCSYIERAK</sequence>
<evidence type="ECO:0000255" key="1">
    <source>
        <dbReference type="HAMAP-Rule" id="MF_00141"/>
    </source>
</evidence>
<comment type="function">
    <text evidence="1">Involved in peptide bond synthesis. Stimulates efficient translation and peptide-bond synthesis on native or reconstituted 70S ribosomes in vitro. Probably functions indirectly by altering the affinity of the ribosome for aminoacyl-tRNA, thus increasing their reactivity as acceptors for peptidyl transferase.</text>
</comment>
<comment type="pathway">
    <text evidence="1">Protein biosynthesis; polypeptide chain elongation.</text>
</comment>
<comment type="subcellular location">
    <subcellularLocation>
        <location evidence="1">Cytoplasm</location>
    </subcellularLocation>
</comment>
<comment type="similarity">
    <text evidence="1">Belongs to the elongation factor P family.</text>
</comment>
<proteinExistence type="inferred from homology"/>
<gene>
    <name evidence="1" type="primary">efp</name>
    <name type="ordered locus">Rru_A1077</name>
</gene>